<gene>
    <name evidence="1" type="primary">rpsQ</name>
    <name type="ordered locus">THA_1224</name>
</gene>
<feature type="chain" id="PRO_1000143314" description="Small ribosomal subunit protein uS17">
    <location>
        <begin position="1"/>
        <end position="99"/>
    </location>
</feature>
<dbReference type="EMBL" id="CP001185">
    <property type="protein sequence ID" value="ACJ75669.1"/>
    <property type="molecule type" value="Genomic_DNA"/>
</dbReference>
<dbReference type="RefSeq" id="WP_004101457.1">
    <property type="nucleotide sequence ID" value="NC_011653.1"/>
</dbReference>
<dbReference type="SMR" id="B7IHV5"/>
<dbReference type="STRING" id="484019.THA_1224"/>
<dbReference type="KEGG" id="taf:THA_1224"/>
<dbReference type="eggNOG" id="COG0186">
    <property type="taxonomic scope" value="Bacteria"/>
</dbReference>
<dbReference type="HOGENOM" id="CLU_073626_1_2_0"/>
<dbReference type="OrthoDB" id="9811714at2"/>
<dbReference type="Proteomes" id="UP000002453">
    <property type="component" value="Chromosome"/>
</dbReference>
<dbReference type="GO" id="GO:0022627">
    <property type="term" value="C:cytosolic small ribosomal subunit"/>
    <property type="evidence" value="ECO:0007669"/>
    <property type="project" value="TreeGrafter"/>
</dbReference>
<dbReference type="GO" id="GO:0019843">
    <property type="term" value="F:rRNA binding"/>
    <property type="evidence" value="ECO:0007669"/>
    <property type="project" value="UniProtKB-UniRule"/>
</dbReference>
<dbReference type="GO" id="GO:0003735">
    <property type="term" value="F:structural constituent of ribosome"/>
    <property type="evidence" value="ECO:0007669"/>
    <property type="project" value="InterPro"/>
</dbReference>
<dbReference type="GO" id="GO:0006412">
    <property type="term" value="P:translation"/>
    <property type="evidence" value="ECO:0007669"/>
    <property type="project" value="UniProtKB-UniRule"/>
</dbReference>
<dbReference type="CDD" id="cd00364">
    <property type="entry name" value="Ribosomal_uS17"/>
    <property type="match status" value="1"/>
</dbReference>
<dbReference type="Gene3D" id="2.40.50.140">
    <property type="entry name" value="Nucleic acid-binding proteins"/>
    <property type="match status" value="1"/>
</dbReference>
<dbReference type="HAMAP" id="MF_01345_B">
    <property type="entry name" value="Ribosomal_uS17_B"/>
    <property type="match status" value="1"/>
</dbReference>
<dbReference type="InterPro" id="IPR012340">
    <property type="entry name" value="NA-bd_OB-fold"/>
</dbReference>
<dbReference type="InterPro" id="IPR000266">
    <property type="entry name" value="Ribosomal_uS17"/>
</dbReference>
<dbReference type="InterPro" id="IPR019984">
    <property type="entry name" value="Ribosomal_uS17_bact/chlr"/>
</dbReference>
<dbReference type="InterPro" id="IPR019979">
    <property type="entry name" value="Ribosomal_uS17_CS"/>
</dbReference>
<dbReference type="NCBIfam" id="NF004123">
    <property type="entry name" value="PRK05610.1"/>
    <property type="match status" value="1"/>
</dbReference>
<dbReference type="NCBIfam" id="TIGR03635">
    <property type="entry name" value="uS17_bact"/>
    <property type="match status" value="1"/>
</dbReference>
<dbReference type="PANTHER" id="PTHR10744">
    <property type="entry name" value="40S RIBOSOMAL PROTEIN S11 FAMILY MEMBER"/>
    <property type="match status" value="1"/>
</dbReference>
<dbReference type="PANTHER" id="PTHR10744:SF1">
    <property type="entry name" value="SMALL RIBOSOMAL SUBUNIT PROTEIN US17M"/>
    <property type="match status" value="1"/>
</dbReference>
<dbReference type="Pfam" id="PF00366">
    <property type="entry name" value="Ribosomal_S17"/>
    <property type="match status" value="1"/>
</dbReference>
<dbReference type="PRINTS" id="PR00973">
    <property type="entry name" value="RIBOSOMALS17"/>
</dbReference>
<dbReference type="SUPFAM" id="SSF50249">
    <property type="entry name" value="Nucleic acid-binding proteins"/>
    <property type="match status" value="1"/>
</dbReference>
<dbReference type="PROSITE" id="PS00056">
    <property type="entry name" value="RIBOSOMAL_S17"/>
    <property type="match status" value="1"/>
</dbReference>
<proteinExistence type="inferred from homology"/>
<accession>B7IHV5</accession>
<reference key="1">
    <citation type="journal article" date="2009" name="J. Bacteriol.">
        <title>The genome of Thermosipho africanus TCF52B: lateral genetic connections to the Firmicutes and Archaea.</title>
        <authorList>
            <person name="Nesboe C.L."/>
            <person name="Bapteste E."/>
            <person name="Curtis B."/>
            <person name="Dahle H."/>
            <person name="Lopez P."/>
            <person name="Macleod D."/>
            <person name="Dlutek M."/>
            <person name="Bowman S."/>
            <person name="Zhaxybayeva O."/>
            <person name="Birkeland N.-K."/>
            <person name="Doolittle W.F."/>
        </authorList>
    </citation>
    <scope>NUCLEOTIDE SEQUENCE [LARGE SCALE GENOMIC DNA]</scope>
    <source>
        <strain>TCF52B</strain>
    </source>
</reference>
<name>RS17_THEAB</name>
<evidence type="ECO:0000255" key="1">
    <source>
        <dbReference type="HAMAP-Rule" id="MF_01345"/>
    </source>
</evidence>
<evidence type="ECO:0000305" key="2"/>
<sequence length="99" mass="11402">MPKKKLIGEVVSDKMDKTVVVAVSTLVKHPRVGKYIKRTKKYYAHDENNECRDGDIVEIIESRPLSKLKRWRVLRIVERSVFADETLDEELEGGSSDDN</sequence>
<keyword id="KW-1185">Reference proteome</keyword>
<keyword id="KW-0687">Ribonucleoprotein</keyword>
<keyword id="KW-0689">Ribosomal protein</keyword>
<keyword id="KW-0694">RNA-binding</keyword>
<keyword id="KW-0699">rRNA-binding</keyword>
<organism>
    <name type="scientific">Thermosipho africanus (strain TCF52B)</name>
    <dbReference type="NCBI Taxonomy" id="484019"/>
    <lineage>
        <taxon>Bacteria</taxon>
        <taxon>Thermotogati</taxon>
        <taxon>Thermotogota</taxon>
        <taxon>Thermotogae</taxon>
        <taxon>Thermotogales</taxon>
        <taxon>Fervidobacteriaceae</taxon>
        <taxon>Thermosipho</taxon>
    </lineage>
</organism>
<comment type="function">
    <text evidence="1">One of the primary rRNA binding proteins, it binds specifically to the 5'-end of 16S ribosomal RNA.</text>
</comment>
<comment type="subunit">
    <text evidence="1">Part of the 30S ribosomal subunit.</text>
</comment>
<comment type="similarity">
    <text evidence="1">Belongs to the universal ribosomal protein uS17 family.</text>
</comment>
<protein>
    <recommendedName>
        <fullName evidence="1">Small ribosomal subunit protein uS17</fullName>
    </recommendedName>
    <alternativeName>
        <fullName evidence="2">30S ribosomal protein S17</fullName>
    </alternativeName>
</protein>